<name>PYRH_CAMC5</name>
<protein>
    <recommendedName>
        <fullName evidence="1">Uridylate kinase</fullName>
        <shortName evidence="1">UK</shortName>
        <ecNumber evidence="1">2.7.4.22</ecNumber>
    </recommendedName>
    <alternativeName>
        <fullName evidence="1">Uridine monophosphate kinase</fullName>
        <shortName evidence="1">UMP kinase</shortName>
        <shortName evidence="1">UMPK</shortName>
    </alternativeName>
</protein>
<dbReference type="EC" id="2.7.4.22" evidence="1"/>
<dbReference type="EMBL" id="CP000767">
    <property type="protein sequence ID" value="EAU00781.2"/>
    <property type="status" value="ALT_INIT"/>
    <property type="molecule type" value="Genomic_DNA"/>
</dbReference>
<dbReference type="RefSeq" id="WP_009650300.1">
    <property type="nucleotide sequence ID" value="NC_009715.2"/>
</dbReference>
<dbReference type="SMR" id="A7GXE5"/>
<dbReference type="STRING" id="360105.CCV52592_0481"/>
<dbReference type="GeneID" id="61001885"/>
<dbReference type="KEGG" id="ccv:CCV52592_0481"/>
<dbReference type="HOGENOM" id="CLU_033861_0_0_7"/>
<dbReference type="OrthoDB" id="9807458at2"/>
<dbReference type="UniPathway" id="UPA00159">
    <property type="reaction ID" value="UER00275"/>
</dbReference>
<dbReference type="Proteomes" id="UP000006380">
    <property type="component" value="Chromosome"/>
</dbReference>
<dbReference type="GO" id="GO:0005829">
    <property type="term" value="C:cytosol"/>
    <property type="evidence" value="ECO:0007669"/>
    <property type="project" value="TreeGrafter"/>
</dbReference>
<dbReference type="GO" id="GO:0005524">
    <property type="term" value="F:ATP binding"/>
    <property type="evidence" value="ECO:0007669"/>
    <property type="project" value="UniProtKB-KW"/>
</dbReference>
<dbReference type="GO" id="GO:0033862">
    <property type="term" value="F:UMP kinase activity"/>
    <property type="evidence" value="ECO:0007669"/>
    <property type="project" value="UniProtKB-EC"/>
</dbReference>
<dbReference type="GO" id="GO:0044210">
    <property type="term" value="P:'de novo' CTP biosynthetic process"/>
    <property type="evidence" value="ECO:0007669"/>
    <property type="project" value="UniProtKB-UniRule"/>
</dbReference>
<dbReference type="GO" id="GO:0006225">
    <property type="term" value="P:UDP biosynthetic process"/>
    <property type="evidence" value="ECO:0007669"/>
    <property type="project" value="TreeGrafter"/>
</dbReference>
<dbReference type="CDD" id="cd04254">
    <property type="entry name" value="AAK_UMPK-PyrH-Ec"/>
    <property type="match status" value="1"/>
</dbReference>
<dbReference type="FunFam" id="3.40.1160.10:FF:000001">
    <property type="entry name" value="Uridylate kinase"/>
    <property type="match status" value="1"/>
</dbReference>
<dbReference type="Gene3D" id="3.40.1160.10">
    <property type="entry name" value="Acetylglutamate kinase-like"/>
    <property type="match status" value="1"/>
</dbReference>
<dbReference type="HAMAP" id="MF_01220_B">
    <property type="entry name" value="PyrH_B"/>
    <property type="match status" value="1"/>
</dbReference>
<dbReference type="InterPro" id="IPR036393">
    <property type="entry name" value="AceGlu_kinase-like_sf"/>
</dbReference>
<dbReference type="InterPro" id="IPR001048">
    <property type="entry name" value="Asp/Glu/Uridylate_kinase"/>
</dbReference>
<dbReference type="InterPro" id="IPR011817">
    <property type="entry name" value="Uridylate_kinase"/>
</dbReference>
<dbReference type="InterPro" id="IPR015963">
    <property type="entry name" value="Uridylate_kinase_bac"/>
</dbReference>
<dbReference type="NCBIfam" id="TIGR02075">
    <property type="entry name" value="pyrH_bact"/>
    <property type="match status" value="1"/>
</dbReference>
<dbReference type="PANTHER" id="PTHR42833">
    <property type="entry name" value="URIDYLATE KINASE"/>
    <property type="match status" value="1"/>
</dbReference>
<dbReference type="PANTHER" id="PTHR42833:SF4">
    <property type="entry name" value="URIDYLATE KINASE PUMPKIN, CHLOROPLASTIC"/>
    <property type="match status" value="1"/>
</dbReference>
<dbReference type="Pfam" id="PF00696">
    <property type="entry name" value="AA_kinase"/>
    <property type="match status" value="1"/>
</dbReference>
<dbReference type="PIRSF" id="PIRSF005650">
    <property type="entry name" value="Uridylate_kin"/>
    <property type="match status" value="1"/>
</dbReference>
<dbReference type="SUPFAM" id="SSF53633">
    <property type="entry name" value="Carbamate kinase-like"/>
    <property type="match status" value="1"/>
</dbReference>
<reference key="1">
    <citation type="submission" date="2007-07" db="EMBL/GenBank/DDBJ databases">
        <title>Genome sequence of Campylobacter curvus 525.92 isolated from human feces.</title>
        <authorList>
            <person name="Fouts D.E."/>
            <person name="Mongodin E.F."/>
            <person name="Puiu D."/>
            <person name="Sebastian Y."/>
            <person name="Miller W.G."/>
            <person name="Mandrell R.E."/>
            <person name="Lastovica A.J."/>
            <person name="Nelson K.E."/>
        </authorList>
    </citation>
    <scope>NUCLEOTIDE SEQUENCE [LARGE SCALE GENOMIC DNA]</scope>
    <source>
        <strain>525.92</strain>
    </source>
</reference>
<organism>
    <name type="scientific">Campylobacter curvus (strain 525.92)</name>
    <dbReference type="NCBI Taxonomy" id="360105"/>
    <lineage>
        <taxon>Bacteria</taxon>
        <taxon>Pseudomonadati</taxon>
        <taxon>Campylobacterota</taxon>
        <taxon>Epsilonproteobacteria</taxon>
        <taxon>Campylobacterales</taxon>
        <taxon>Campylobacteraceae</taxon>
        <taxon>Campylobacter</taxon>
    </lineage>
</organism>
<sequence length="238" mass="25618">MSDKKRVLVKFSGEALAGDSGFGIDTAILKFIADEIKELVTNGTEVCIVIGGGNIIRGVSAAKDGIIRRTSGDHMGMLATVINSIAMREALERGGLDVRVQSAIKMEAICETFIVGRANRHLEKGRVVIFAAGTGNPFFTTDTAATLRAIEIGSDMIIKATKVDGVYDKDPNKFKDAKLLKSLSYEKAMSDDIKVMDDTAIALAKDNSLPILVCNMFKQGNLLKIISEDAKALYSIVK</sequence>
<feature type="chain" id="PRO_0000323820" description="Uridylate kinase">
    <location>
        <begin position="1"/>
        <end position="238"/>
    </location>
</feature>
<feature type="region of interest" description="Involved in allosteric activation by GTP" evidence="1">
    <location>
        <begin position="18"/>
        <end position="23"/>
    </location>
</feature>
<feature type="binding site" evidence="1">
    <location>
        <begin position="10"/>
        <end position="13"/>
    </location>
    <ligand>
        <name>ATP</name>
        <dbReference type="ChEBI" id="CHEBI:30616"/>
    </ligand>
</feature>
<feature type="binding site" evidence="1">
    <location>
        <position position="52"/>
    </location>
    <ligand>
        <name>UMP</name>
        <dbReference type="ChEBI" id="CHEBI:57865"/>
    </ligand>
</feature>
<feature type="binding site" evidence="1">
    <location>
        <position position="53"/>
    </location>
    <ligand>
        <name>ATP</name>
        <dbReference type="ChEBI" id="CHEBI:30616"/>
    </ligand>
</feature>
<feature type="binding site" evidence="1">
    <location>
        <position position="57"/>
    </location>
    <ligand>
        <name>ATP</name>
        <dbReference type="ChEBI" id="CHEBI:30616"/>
    </ligand>
</feature>
<feature type="binding site" evidence="1">
    <location>
        <position position="73"/>
    </location>
    <ligand>
        <name>UMP</name>
        <dbReference type="ChEBI" id="CHEBI:57865"/>
    </ligand>
</feature>
<feature type="binding site" evidence="1">
    <location>
        <begin position="134"/>
        <end position="141"/>
    </location>
    <ligand>
        <name>UMP</name>
        <dbReference type="ChEBI" id="CHEBI:57865"/>
    </ligand>
</feature>
<feature type="binding site" evidence="1">
    <location>
        <position position="161"/>
    </location>
    <ligand>
        <name>ATP</name>
        <dbReference type="ChEBI" id="CHEBI:30616"/>
    </ligand>
</feature>
<feature type="binding site" evidence="1">
    <location>
        <position position="167"/>
    </location>
    <ligand>
        <name>ATP</name>
        <dbReference type="ChEBI" id="CHEBI:30616"/>
    </ligand>
</feature>
<feature type="binding site" evidence="1">
    <location>
        <position position="170"/>
    </location>
    <ligand>
        <name>ATP</name>
        <dbReference type="ChEBI" id="CHEBI:30616"/>
    </ligand>
</feature>
<comment type="function">
    <text evidence="1">Catalyzes the reversible phosphorylation of UMP to UDP.</text>
</comment>
<comment type="catalytic activity">
    <reaction evidence="1">
        <text>UMP + ATP = UDP + ADP</text>
        <dbReference type="Rhea" id="RHEA:24400"/>
        <dbReference type="ChEBI" id="CHEBI:30616"/>
        <dbReference type="ChEBI" id="CHEBI:57865"/>
        <dbReference type="ChEBI" id="CHEBI:58223"/>
        <dbReference type="ChEBI" id="CHEBI:456216"/>
        <dbReference type="EC" id="2.7.4.22"/>
    </reaction>
</comment>
<comment type="activity regulation">
    <text evidence="1">Allosterically activated by GTP. Inhibited by UTP.</text>
</comment>
<comment type="pathway">
    <text evidence="1">Pyrimidine metabolism; CTP biosynthesis via de novo pathway; UDP from UMP (UMPK route): step 1/1.</text>
</comment>
<comment type="subunit">
    <text evidence="1">Homohexamer.</text>
</comment>
<comment type="subcellular location">
    <subcellularLocation>
        <location evidence="1">Cytoplasm</location>
    </subcellularLocation>
</comment>
<comment type="similarity">
    <text evidence="1">Belongs to the UMP kinase family.</text>
</comment>
<comment type="sequence caution" evidence="2">
    <conflict type="erroneous initiation">
        <sequence resource="EMBL-CDS" id="EAU00781"/>
    </conflict>
</comment>
<evidence type="ECO:0000255" key="1">
    <source>
        <dbReference type="HAMAP-Rule" id="MF_01220"/>
    </source>
</evidence>
<evidence type="ECO:0000305" key="2"/>
<gene>
    <name evidence="1" type="primary">pyrH</name>
    <name type="ordered locus">Ccur92_05830</name>
    <name type="ORF">CCV52592_0481</name>
</gene>
<accession>A7GXE5</accession>
<proteinExistence type="inferred from homology"/>
<keyword id="KW-0021">Allosteric enzyme</keyword>
<keyword id="KW-0067">ATP-binding</keyword>
<keyword id="KW-0963">Cytoplasm</keyword>
<keyword id="KW-0418">Kinase</keyword>
<keyword id="KW-0547">Nucleotide-binding</keyword>
<keyword id="KW-0665">Pyrimidine biosynthesis</keyword>
<keyword id="KW-1185">Reference proteome</keyword>
<keyword id="KW-0808">Transferase</keyword>